<organism>
    <name type="scientific">Trichlorobacter lovleyi (strain ATCC BAA-1151 / DSM 17278 / SZ)</name>
    <name type="common">Geobacter lovleyi</name>
    <dbReference type="NCBI Taxonomy" id="398767"/>
    <lineage>
        <taxon>Bacteria</taxon>
        <taxon>Pseudomonadati</taxon>
        <taxon>Thermodesulfobacteriota</taxon>
        <taxon>Desulfuromonadia</taxon>
        <taxon>Geobacterales</taxon>
        <taxon>Geobacteraceae</taxon>
        <taxon>Trichlorobacter</taxon>
    </lineage>
</organism>
<comment type="function">
    <text evidence="1">Catalyzes the ATP-dependent amidation of deamido-NAD to form NAD. Uses ammonia as a nitrogen source.</text>
</comment>
<comment type="catalytic activity">
    <reaction evidence="1">
        <text>deamido-NAD(+) + NH4(+) + ATP = AMP + diphosphate + NAD(+) + H(+)</text>
        <dbReference type="Rhea" id="RHEA:21188"/>
        <dbReference type="ChEBI" id="CHEBI:15378"/>
        <dbReference type="ChEBI" id="CHEBI:28938"/>
        <dbReference type="ChEBI" id="CHEBI:30616"/>
        <dbReference type="ChEBI" id="CHEBI:33019"/>
        <dbReference type="ChEBI" id="CHEBI:57540"/>
        <dbReference type="ChEBI" id="CHEBI:58437"/>
        <dbReference type="ChEBI" id="CHEBI:456215"/>
        <dbReference type="EC" id="6.3.1.5"/>
    </reaction>
</comment>
<comment type="pathway">
    <text evidence="1">Cofactor biosynthesis; NAD(+) biosynthesis; NAD(+) from deamido-NAD(+) (ammonia route): step 1/1.</text>
</comment>
<comment type="subunit">
    <text evidence="1">Homodimer.</text>
</comment>
<comment type="similarity">
    <text evidence="1">Belongs to the NAD synthetase family.</text>
</comment>
<proteinExistence type="inferred from homology"/>
<reference key="1">
    <citation type="submission" date="2008-05" db="EMBL/GenBank/DDBJ databases">
        <title>Complete sequence of chromosome of Geobacter lovleyi SZ.</title>
        <authorList>
            <consortium name="US DOE Joint Genome Institute"/>
            <person name="Lucas S."/>
            <person name="Copeland A."/>
            <person name="Lapidus A."/>
            <person name="Glavina del Rio T."/>
            <person name="Dalin E."/>
            <person name="Tice H."/>
            <person name="Bruce D."/>
            <person name="Goodwin L."/>
            <person name="Pitluck S."/>
            <person name="Chertkov O."/>
            <person name="Meincke L."/>
            <person name="Brettin T."/>
            <person name="Detter J.C."/>
            <person name="Han C."/>
            <person name="Tapia R."/>
            <person name="Kuske C.R."/>
            <person name="Schmutz J."/>
            <person name="Larimer F."/>
            <person name="Land M."/>
            <person name="Hauser L."/>
            <person name="Kyrpides N."/>
            <person name="Mikhailova N."/>
            <person name="Sung Y."/>
            <person name="Fletcher K.E."/>
            <person name="Ritalahti K.M."/>
            <person name="Loeffler F.E."/>
            <person name="Richardson P."/>
        </authorList>
    </citation>
    <scope>NUCLEOTIDE SEQUENCE [LARGE SCALE GENOMIC DNA]</scope>
    <source>
        <strain>ATCC BAA-1151 / DSM 17278 / SZ</strain>
    </source>
</reference>
<keyword id="KW-0067">ATP-binding</keyword>
<keyword id="KW-0436">Ligase</keyword>
<keyword id="KW-0460">Magnesium</keyword>
<keyword id="KW-0479">Metal-binding</keyword>
<keyword id="KW-0520">NAD</keyword>
<keyword id="KW-0547">Nucleotide-binding</keyword>
<keyword id="KW-1185">Reference proteome</keyword>
<evidence type="ECO:0000255" key="1">
    <source>
        <dbReference type="HAMAP-Rule" id="MF_00193"/>
    </source>
</evidence>
<protein>
    <recommendedName>
        <fullName evidence="1">NH(3)-dependent NAD(+) synthetase</fullName>
        <ecNumber evidence="1">6.3.1.5</ecNumber>
    </recommendedName>
</protein>
<accession>B3E4K8</accession>
<name>NADE_TRIL1</name>
<dbReference type="EC" id="6.3.1.5" evidence="1"/>
<dbReference type="EMBL" id="CP001089">
    <property type="protein sequence ID" value="ACD95944.1"/>
    <property type="molecule type" value="Genomic_DNA"/>
</dbReference>
<dbReference type="RefSeq" id="WP_012470280.1">
    <property type="nucleotide sequence ID" value="NC_010814.1"/>
</dbReference>
<dbReference type="SMR" id="B3E4K8"/>
<dbReference type="STRING" id="398767.Glov_2228"/>
<dbReference type="KEGG" id="glo:Glov_2228"/>
<dbReference type="eggNOG" id="COG0171">
    <property type="taxonomic scope" value="Bacteria"/>
</dbReference>
<dbReference type="HOGENOM" id="CLU_059327_1_2_7"/>
<dbReference type="OrthoDB" id="9799210at2"/>
<dbReference type="UniPathway" id="UPA00253">
    <property type="reaction ID" value="UER00333"/>
</dbReference>
<dbReference type="Proteomes" id="UP000002420">
    <property type="component" value="Chromosome"/>
</dbReference>
<dbReference type="GO" id="GO:0005737">
    <property type="term" value="C:cytoplasm"/>
    <property type="evidence" value="ECO:0007669"/>
    <property type="project" value="InterPro"/>
</dbReference>
<dbReference type="GO" id="GO:0005524">
    <property type="term" value="F:ATP binding"/>
    <property type="evidence" value="ECO:0007669"/>
    <property type="project" value="UniProtKB-UniRule"/>
</dbReference>
<dbReference type="GO" id="GO:0004359">
    <property type="term" value="F:glutaminase activity"/>
    <property type="evidence" value="ECO:0007669"/>
    <property type="project" value="InterPro"/>
</dbReference>
<dbReference type="GO" id="GO:0046872">
    <property type="term" value="F:metal ion binding"/>
    <property type="evidence" value="ECO:0007669"/>
    <property type="project" value="UniProtKB-KW"/>
</dbReference>
<dbReference type="GO" id="GO:0003952">
    <property type="term" value="F:NAD+ synthase (glutamine-hydrolyzing) activity"/>
    <property type="evidence" value="ECO:0007669"/>
    <property type="project" value="InterPro"/>
</dbReference>
<dbReference type="GO" id="GO:0008795">
    <property type="term" value="F:NAD+ synthase activity"/>
    <property type="evidence" value="ECO:0007669"/>
    <property type="project" value="UniProtKB-UniRule"/>
</dbReference>
<dbReference type="GO" id="GO:0009435">
    <property type="term" value="P:NAD biosynthetic process"/>
    <property type="evidence" value="ECO:0007669"/>
    <property type="project" value="UniProtKB-UniRule"/>
</dbReference>
<dbReference type="CDD" id="cd00553">
    <property type="entry name" value="NAD_synthase"/>
    <property type="match status" value="1"/>
</dbReference>
<dbReference type="FunFam" id="3.40.50.620:FF:000106">
    <property type="entry name" value="Glutamine-dependent NAD(+) synthetase"/>
    <property type="match status" value="1"/>
</dbReference>
<dbReference type="Gene3D" id="3.40.50.620">
    <property type="entry name" value="HUPs"/>
    <property type="match status" value="1"/>
</dbReference>
<dbReference type="HAMAP" id="MF_00193">
    <property type="entry name" value="NadE_ammonia_dep"/>
    <property type="match status" value="1"/>
</dbReference>
<dbReference type="InterPro" id="IPR022310">
    <property type="entry name" value="NAD/GMP_synthase"/>
</dbReference>
<dbReference type="InterPro" id="IPR003694">
    <property type="entry name" value="NAD_synthase"/>
</dbReference>
<dbReference type="InterPro" id="IPR022926">
    <property type="entry name" value="NH(3)-dep_NAD(+)_synth"/>
</dbReference>
<dbReference type="InterPro" id="IPR014729">
    <property type="entry name" value="Rossmann-like_a/b/a_fold"/>
</dbReference>
<dbReference type="NCBIfam" id="TIGR00552">
    <property type="entry name" value="nadE"/>
    <property type="match status" value="1"/>
</dbReference>
<dbReference type="NCBIfam" id="NF010587">
    <property type="entry name" value="PRK13980.1"/>
    <property type="match status" value="1"/>
</dbReference>
<dbReference type="PANTHER" id="PTHR23090:SF9">
    <property type="entry name" value="GLUTAMINE-DEPENDENT NAD(+) SYNTHETASE"/>
    <property type="match status" value="1"/>
</dbReference>
<dbReference type="PANTHER" id="PTHR23090">
    <property type="entry name" value="NH 3 /GLUTAMINE-DEPENDENT NAD + SYNTHETASE"/>
    <property type="match status" value="1"/>
</dbReference>
<dbReference type="Pfam" id="PF02540">
    <property type="entry name" value="NAD_synthase"/>
    <property type="match status" value="1"/>
</dbReference>
<dbReference type="SUPFAM" id="SSF52402">
    <property type="entry name" value="Adenine nucleotide alpha hydrolases-like"/>
    <property type="match status" value="1"/>
</dbReference>
<sequence length="273" mass="30412">MSRLNINTKLVRRMLVGFLQDEIWKVGAKKAVLGLSGGIDSALVCHLAAEALGPENVHAICMPYRTSNPESEAHARLVAEASGVQFSVVGITPMVDAYFDQFPDANNMRRGNKMARERMTVLFDHSALYGGLVLGTSNKTELLLGYGTLYGDMASALNPIGDLYKTQVWQLSEEVGVPKPVIEKKPSADLWAGQTDEEELGFTYREVDELLYRMVDQRADTAELVAAGFKQEFVSSIYSKVQNSHFKRRLPVIAKVSGRTIDRDFRYSRDWGK</sequence>
<feature type="chain" id="PRO_1000099023" description="NH(3)-dependent NAD(+) synthetase">
    <location>
        <begin position="1"/>
        <end position="273"/>
    </location>
</feature>
<feature type="binding site" evidence="1">
    <location>
        <begin position="34"/>
        <end position="41"/>
    </location>
    <ligand>
        <name>ATP</name>
        <dbReference type="ChEBI" id="CHEBI:30616"/>
    </ligand>
</feature>
<feature type="binding site" evidence="1">
    <location>
        <position position="40"/>
    </location>
    <ligand>
        <name>Mg(2+)</name>
        <dbReference type="ChEBI" id="CHEBI:18420"/>
    </ligand>
</feature>
<feature type="binding site" evidence="1">
    <location>
        <position position="116"/>
    </location>
    <ligand>
        <name>deamido-NAD(+)</name>
        <dbReference type="ChEBI" id="CHEBI:58437"/>
    </ligand>
</feature>
<feature type="binding site" evidence="1">
    <location>
        <position position="136"/>
    </location>
    <ligand>
        <name>ATP</name>
        <dbReference type="ChEBI" id="CHEBI:30616"/>
    </ligand>
</feature>
<feature type="binding site" evidence="1">
    <location>
        <position position="141"/>
    </location>
    <ligand>
        <name>Mg(2+)</name>
        <dbReference type="ChEBI" id="CHEBI:18420"/>
    </ligand>
</feature>
<feature type="binding site" evidence="1">
    <location>
        <position position="165"/>
    </location>
    <ligand>
        <name>ATP</name>
        <dbReference type="ChEBI" id="CHEBI:30616"/>
    </ligand>
</feature>
<feature type="binding site" evidence="1">
    <location>
        <position position="187"/>
    </location>
    <ligand>
        <name>ATP</name>
        <dbReference type="ChEBI" id="CHEBI:30616"/>
    </ligand>
</feature>
<gene>
    <name evidence="1" type="primary">nadE</name>
    <name type="ordered locus">Glov_2228</name>
</gene>